<feature type="chain" id="PRO_0000114347" description="Cell division protein FtsZ">
    <location>
        <begin position="1"/>
        <end position="508"/>
    </location>
</feature>
<feature type="region of interest" description="Disordered" evidence="2">
    <location>
        <begin position="342"/>
        <end position="389"/>
    </location>
</feature>
<feature type="region of interest" description="Disordered" evidence="2">
    <location>
        <begin position="428"/>
        <end position="508"/>
    </location>
</feature>
<feature type="compositionally biased region" description="Low complexity" evidence="2">
    <location>
        <begin position="464"/>
        <end position="482"/>
    </location>
</feature>
<feature type="binding site" evidence="1">
    <location>
        <begin position="24"/>
        <end position="28"/>
    </location>
    <ligand>
        <name>GTP</name>
        <dbReference type="ChEBI" id="CHEBI:37565"/>
    </ligand>
</feature>
<feature type="binding site" evidence="1">
    <location>
        <begin position="111"/>
        <end position="113"/>
    </location>
    <ligand>
        <name>GTP</name>
        <dbReference type="ChEBI" id="CHEBI:37565"/>
    </ligand>
</feature>
<feature type="binding site" evidence="1">
    <location>
        <position position="142"/>
    </location>
    <ligand>
        <name>GTP</name>
        <dbReference type="ChEBI" id="CHEBI:37565"/>
    </ligand>
</feature>
<feature type="binding site" evidence="1">
    <location>
        <position position="146"/>
    </location>
    <ligand>
        <name>GTP</name>
        <dbReference type="ChEBI" id="CHEBI:37565"/>
    </ligand>
</feature>
<feature type="binding site" evidence="1">
    <location>
        <position position="190"/>
    </location>
    <ligand>
        <name>GTP</name>
        <dbReference type="ChEBI" id="CHEBI:37565"/>
    </ligand>
</feature>
<reference key="1">
    <citation type="journal article" date="2001" name="Proc. Natl. Acad. Sci. U.S.A.">
        <title>Complete genome sequence of Caulobacter crescentus.</title>
        <authorList>
            <person name="Nierman W.C."/>
            <person name="Feldblyum T.V."/>
            <person name="Laub M.T."/>
            <person name="Paulsen I.T."/>
            <person name="Nelson K.E."/>
            <person name="Eisen J.A."/>
            <person name="Heidelberg J.F."/>
            <person name="Alley M.R.K."/>
            <person name="Ohta N."/>
            <person name="Maddock J.R."/>
            <person name="Potocka I."/>
            <person name="Nelson W.C."/>
            <person name="Newton A."/>
            <person name="Stephens C."/>
            <person name="Phadke N.D."/>
            <person name="Ely B."/>
            <person name="DeBoy R.T."/>
            <person name="Dodson R.J."/>
            <person name="Durkin A.S."/>
            <person name="Gwinn M.L."/>
            <person name="Haft D.H."/>
            <person name="Kolonay J.F."/>
            <person name="Smit J."/>
            <person name="Craven M.B."/>
            <person name="Khouri H.M."/>
            <person name="Shetty J."/>
            <person name="Berry K.J."/>
            <person name="Utterback T.R."/>
            <person name="Tran K."/>
            <person name="Wolf A.M."/>
            <person name="Vamathevan J.J."/>
            <person name="Ermolaeva M.D."/>
            <person name="White O."/>
            <person name="Salzberg S.L."/>
            <person name="Venter J.C."/>
            <person name="Shapiro L."/>
            <person name="Fraser C.M."/>
        </authorList>
    </citation>
    <scope>NUCLEOTIDE SEQUENCE [LARGE SCALE GENOMIC DNA]</scope>
    <source>
        <strain>ATCC 19089 / CIP 103742 / CB 15</strain>
    </source>
</reference>
<organism>
    <name type="scientific">Caulobacter vibrioides (strain ATCC 19089 / CIP 103742 / CB 15)</name>
    <name type="common">Caulobacter crescentus</name>
    <dbReference type="NCBI Taxonomy" id="190650"/>
    <lineage>
        <taxon>Bacteria</taxon>
        <taxon>Pseudomonadati</taxon>
        <taxon>Pseudomonadota</taxon>
        <taxon>Alphaproteobacteria</taxon>
        <taxon>Caulobacterales</taxon>
        <taxon>Caulobacteraceae</taxon>
        <taxon>Caulobacter</taxon>
    </lineage>
</organism>
<accession>P0CAU9</accession>
<accession>P52976</accession>
<proteinExistence type="inferred from homology"/>
<comment type="function">
    <text evidence="1">Essential cell division protein that forms a contractile ring structure (Z ring) at the future cell division site. The regulation of the ring assembly controls the timing and the location of cell division. One of the functions of the FtsZ ring is to recruit other cell division proteins to the septum to produce a new cell wall between the dividing cells. Binds GTP and shows GTPase activity.</text>
</comment>
<comment type="subunit">
    <text evidence="1">Homodimer. Polymerizes to form a dynamic ring structure in a strictly GTP-dependent manner. Interacts directly with several other division proteins.</text>
</comment>
<comment type="subcellular location">
    <subcellularLocation>
        <location evidence="1">Cytoplasm</location>
    </subcellularLocation>
    <text evidence="1">Assembles at midcell at the inner surface of the cytoplasmic membrane.</text>
</comment>
<comment type="similarity">
    <text evidence="1">Belongs to the FtsZ family.</text>
</comment>
<name>FTSZ_CAUVC</name>
<protein>
    <recommendedName>
        <fullName evidence="1">Cell division protein FtsZ</fullName>
    </recommendedName>
</protein>
<dbReference type="EMBL" id="AE005673">
    <property type="protein sequence ID" value="AAK24511.1"/>
    <property type="molecule type" value="Genomic_DNA"/>
</dbReference>
<dbReference type="PIR" id="C87564">
    <property type="entry name" value="C87564"/>
</dbReference>
<dbReference type="RefSeq" id="NP_421343.1">
    <property type="nucleotide sequence ID" value="NC_002696.2"/>
</dbReference>
<dbReference type="RefSeq" id="WP_010920397.1">
    <property type="nucleotide sequence ID" value="NC_002696.2"/>
</dbReference>
<dbReference type="SMR" id="P0CAU9"/>
<dbReference type="STRING" id="190650.CC_2540"/>
<dbReference type="EnsemblBacteria" id="AAK24511">
    <property type="protein sequence ID" value="AAK24511"/>
    <property type="gene ID" value="CC_2540"/>
</dbReference>
<dbReference type="KEGG" id="ccr:CC_2540"/>
<dbReference type="PATRIC" id="fig|190650.5.peg.2554"/>
<dbReference type="eggNOG" id="COG0206">
    <property type="taxonomic scope" value="Bacteria"/>
</dbReference>
<dbReference type="HOGENOM" id="CLU_024865_5_2_5"/>
<dbReference type="BioCyc" id="CAULO:CC2540-MONOMER"/>
<dbReference type="Proteomes" id="UP000001816">
    <property type="component" value="Chromosome"/>
</dbReference>
<dbReference type="GO" id="GO:0032153">
    <property type="term" value="C:cell division site"/>
    <property type="evidence" value="ECO:0007669"/>
    <property type="project" value="UniProtKB-UniRule"/>
</dbReference>
<dbReference type="GO" id="GO:0005737">
    <property type="term" value="C:cytoplasm"/>
    <property type="evidence" value="ECO:0007669"/>
    <property type="project" value="UniProtKB-SubCell"/>
</dbReference>
<dbReference type="GO" id="GO:0005525">
    <property type="term" value="F:GTP binding"/>
    <property type="evidence" value="ECO:0007669"/>
    <property type="project" value="UniProtKB-UniRule"/>
</dbReference>
<dbReference type="GO" id="GO:0003924">
    <property type="term" value="F:GTPase activity"/>
    <property type="evidence" value="ECO:0007669"/>
    <property type="project" value="UniProtKB-UniRule"/>
</dbReference>
<dbReference type="GO" id="GO:0000917">
    <property type="term" value="P:division septum assembly"/>
    <property type="evidence" value="ECO:0007669"/>
    <property type="project" value="UniProtKB-KW"/>
</dbReference>
<dbReference type="GO" id="GO:0043093">
    <property type="term" value="P:FtsZ-dependent cytokinesis"/>
    <property type="evidence" value="ECO:0007669"/>
    <property type="project" value="UniProtKB-UniRule"/>
</dbReference>
<dbReference type="GO" id="GO:0051258">
    <property type="term" value="P:protein polymerization"/>
    <property type="evidence" value="ECO:0007669"/>
    <property type="project" value="UniProtKB-UniRule"/>
</dbReference>
<dbReference type="CDD" id="cd02201">
    <property type="entry name" value="FtsZ_type1"/>
    <property type="match status" value="1"/>
</dbReference>
<dbReference type="FunFam" id="3.30.1330.20:FF:000011">
    <property type="entry name" value="Cell division protein FtsZ"/>
    <property type="match status" value="1"/>
</dbReference>
<dbReference type="FunFam" id="3.40.50.1440:FF:000001">
    <property type="entry name" value="Cell division protein FtsZ"/>
    <property type="match status" value="1"/>
</dbReference>
<dbReference type="Gene3D" id="3.30.1330.20">
    <property type="entry name" value="Tubulin/FtsZ, C-terminal domain"/>
    <property type="match status" value="1"/>
</dbReference>
<dbReference type="Gene3D" id="3.40.50.1440">
    <property type="entry name" value="Tubulin/FtsZ, GTPase domain"/>
    <property type="match status" value="1"/>
</dbReference>
<dbReference type="HAMAP" id="MF_00909">
    <property type="entry name" value="FtsZ"/>
    <property type="match status" value="1"/>
</dbReference>
<dbReference type="InterPro" id="IPR000158">
    <property type="entry name" value="Cell_div_FtsZ"/>
</dbReference>
<dbReference type="InterPro" id="IPR020805">
    <property type="entry name" value="Cell_div_FtsZ_CS"/>
</dbReference>
<dbReference type="InterPro" id="IPR045061">
    <property type="entry name" value="FtsZ/CetZ"/>
</dbReference>
<dbReference type="InterPro" id="IPR024757">
    <property type="entry name" value="FtsZ_C"/>
</dbReference>
<dbReference type="InterPro" id="IPR008280">
    <property type="entry name" value="Tub_FtsZ_C"/>
</dbReference>
<dbReference type="InterPro" id="IPR037103">
    <property type="entry name" value="Tubulin/FtsZ-like_C"/>
</dbReference>
<dbReference type="InterPro" id="IPR018316">
    <property type="entry name" value="Tubulin/FtsZ_2-layer-sand-dom"/>
</dbReference>
<dbReference type="InterPro" id="IPR036525">
    <property type="entry name" value="Tubulin/FtsZ_GTPase_sf"/>
</dbReference>
<dbReference type="InterPro" id="IPR003008">
    <property type="entry name" value="Tubulin_FtsZ_GTPase"/>
</dbReference>
<dbReference type="NCBIfam" id="TIGR00065">
    <property type="entry name" value="ftsZ"/>
    <property type="match status" value="1"/>
</dbReference>
<dbReference type="PANTHER" id="PTHR30314">
    <property type="entry name" value="CELL DIVISION PROTEIN FTSZ-RELATED"/>
    <property type="match status" value="1"/>
</dbReference>
<dbReference type="PANTHER" id="PTHR30314:SF3">
    <property type="entry name" value="MITOCHONDRIAL DIVISION PROTEIN FSZA"/>
    <property type="match status" value="1"/>
</dbReference>
<dbReference type="Pfam" id="PF12327">
    <property type="entry name" value="FtsZ_C"/>
    <property type="match status" value="1"/>
</dbReference>
<dbReference type="Pfam" id="PF00091">
    <property type="entry name" value="Tubulin"/>
    <property type="match status" value="1"/>
</dbReference>
<dbReference type="PRINTS" id="PR00423">
    <property type="entry name" value="CELLDVISFTSZ"/>
</dbReference>
<dbReference type="SMART" id="SM00864">
    <property type="entry name" value="Tubulin"/>
    <property type="match status" value="1"/>
</dbReference>
<dbReference type="SMART" id="SM00865">
    <property type="entry name" value="Tubulin_C"/>
    <property type="match status" value="1"/>
</dbReference>
<dbReference type="SUPFAM" id="SSF55307">
    <property type="entry name" value="Tubulin C-terminal domain-like"/>
    <property type="match status" value="1"/>
</dbReference>
<dbReference type="SUPFAM" id="SSF52490">
    <property type="entry name" value="Tubulin nucleotide-binding domain-like"/>
    <property type="match status" value="1"/>
</dbReference>
<dbReference type="PROSITE" id="PS01134">
    <property type="entry name" value="FTSZ_1"/>
    <property type="match status" value="1"/>
</dbReference>
<dbReference type="PROSITE" id="PS01135">
    <property type="entry name" value="FTSZ_2"/>
    <property type="match status" value="1"/>
</dbReference>
<gene>
    <name evidence="1" type="primary">ftsZ</name>
    <name type="ordered locus">CC_2540</name>
</gene>
<sequence>MAISLSAPRTTELKPRIVVFGVGGAGGNAVNNMIEAGLEGVEFVVANTDAQQLQFAKTDRRIQLGVQITQGLGAGAHPEVGMSAAEESFPEIGEHLDGAHMVFITAGMGGGTGTGAAPIIAKCARERGILTVGVVTKPFHFEGRHRMRLADSGIQELQRYVDTLIVIPNQNLFRVANERTTFAEAFGMADQVLHSGVRSITDLMVLPGLINLDFADVRTVMTEMGKAMMGTGEGTGEDRALMAAQNAIANPLLDEVSLKGAKAVLVNVTGGMDMTLLEVDEAANAISDQVDPEANIIFGAAFDPSLEGVIRVSVVATGMDGASIAQIEPKPVSRNISAAPLIAETSRPAPQPEPARPTARYEAARPAERPVAFAPEPAPEPEIVMSAPQPEPEAELYYDEPTVAEEPRVSAAPARSVNRIVDPLVDDVAEEPLFPENNYYEERRPQKQGGFFSMFGGGRQRYEQQASAPQAQARSAQSARPQLQPIETPQADDAEDLEIPSFLRRLAN</sequence>
<keyword id="KW-0131">Cell cycle</keyword>
<keyword id="KW-0132">Cell division</keyword>
<keyword id="KW-0963">Cytoplasm</keyword>
<keyword id="KW-0342">GTP-binding</keyword>
<keyword id="KW-0547">Nucleotide-binding</keyword>
<keyword id="KW-1185">Reference proteome</keyword>
<keyword id="KW-0717">Septation</keyword>
<evidence type="ECO:0000255" key="1">
    <source>
        <dbReference type="HAMAP-Rule" id="MF_00909"/>
    </source>
</evidence>
<evidence type="ECO:0000256" key="2">
    <source>
        <dbReference type="SAM" id="MobiDB-lite"/>
    </source>
</evidence>